<organism>
    <name type="scientific">Rickettsia prowazekii (strain Madrid E)</name>
    <dbReference type="NCBI Taxonomy" id="272947"/>
    <lineage>
        <taxon>Bacteria</taxon>
        <taxon>Pseudomonadati</taxon>
        <taxon>Pseudomonadota</taxon>
        <taxon>Alphaproteobacteria</taxon>
        <taxon>Rickettsiales</taxon>
        <taxon>Rickettsiaceae</taxon>
        <taxon>Rickettsieae</taxon>
        <taxon>Rickettsia</taxon>
        <taxon>typhus group</taxon>
    </lineage>
</organism>
<proteinExistence type="inferred from homology"/>
<accession>Q9ZDK9</accession>
<keyword id="KW-0021">Allosteric enzyme</keyword>
<keyword id="KW-0963">Cytoplasm</keyword>
<keyword id="KW-0378">Hydrolase</keyword>
<keyword id="KW-0479">Metal-binding</keyword>
<keyword id="KW-0645">Protease</keyword>
<keyword id="KW-1185">Reference proteome</keyword>
<keyword id="KW-0915">Sodium</keyword>
<keyword id="KW-0888">Threonine protease</keyword>
<evidence type="ECO:0000255" key="1">
    <source>
        <dbReference type="HAMAP-Rule" id="MF_00248"/>
    </source>
</evidence>
<comment type="function">
    <text evidence="1">Protease subunit of a proteasome-like degradation complex believed to be a general protein degrading machinery.</text>
</comment>
<comment type="catalytic activity">
    <reaction evidence="1">
        <text>ATP-dependent cleavage of peptide bonds with broad specificity.</text>
        <dbReference type="EC" id="3.4.25.2"/>
    </reaction>
</comment>
<comment type="activity regulation">
    <text evidence="1">Allosterically activated by HslU binding.</text>
</comment>
<comment type="subunit">
    <text evidence="1">A double ring-shaped homohexamer of HslV is capped on each side by a ring-shaped HslU homohexamer. The assembly of the HslU/HslV complex is dependent on binding of ATP.</text>
</comment>
<comment type="subcellular location">
    <subcellularLocation>
        <location evidence="1">Cytoplasm</location>
    </subcellularLocation>
</comment>
<comment type="similarity">
    <text evidence="1">Belongs to the peptidase T1B family. HslV subfamily.</text>
</comment>
<dbReference type="EC" id="3.4.25.2" evidence="1"/>
<dbReference type="EMBL" id="AJ235271">
    <property type="protein sequence ID" value="CAA14779.1"/>
    <property type="molecule type" value="Genomic_DNA"/>
</dbReference>
<dbReference type="PIR" id="A71688">
    <property type="entry name" value="A71688"/>
</dbReference>
<dbReference type="RefSeq" id="NP_220702.1">
    <property type="nucleotide sequence ID" value="NC_000963.1"/>
</dbReference>
<dbReference type="RefSeq" id="WP_004597428.1">
    <property type="nucleotide sequence ID" value="NC_000963.1"/>
</dbReference>
<dbReference type="SMR" id="Q9ZDK9"/>
<dbReference type="STRING" id="272947.gene:17555399"/>
<dbReference type="EnsemblBacteria" id="CAA14779">
    <property type="protein sequence ID" value="CAA14779"/>
    <property type="gene ID" value="CAA14779"/>
</dbReference>
<dbReference type="GeneID" id="57569445"/>
<dbReference type="KEGG" id="rpr:RP319"/>
<dbReference type="PATRIC" id="fig|272947.5.peg.328"/>
<dbReference type="eggNOG" id="COG5405">
    <property type="taxonomic scope" value="Bacteria"/>
</dbReference>
<dbReference type="HOGENOM" id="CLU_093872_1_0_5"/>
<dbReference type="OrthoDB" id="9804884at2"/>
<dbReference type="Proteomes" id="UP000002480">
    <property type="component" value="Chromosome"/>
</dbReference>
<dbReference type="GO" id="GO:0009376">
    <property type="term" value="C:HslUV protease complex"/>
    <property type="evidence" value="ECO:0007669"/>
    <property type="project" value="UniProtKB-UniRule"/>
</dbReference>
<dbReference type="GO" id="GO:0005839">
    <property type="term" value="C:proteasome core complex"/>
    <property type="evidence" value="ECO:0007669"/>
    <property type="project" value="InterPro"/>
</dbReference>
<dbReference type="GO" id="GO:0046872">
    <property type="term" value="F:metal ion binding"/>
    <property type="evidence" value="ECO:0007669"/>
    <property type="project" value="UniProtKB-KW"/>
</dbReference>
<dbReference type="GO" id="GO:0004298">
    <property type="term" value="F:threonine-type endopeptidase activity"/>
    <property type="evidence" value="ECO:0007669"/>
    <property type="project" value="UniProtKB-KW"/>
</dbReference>
<dbReference type="GO" id="GO:0051603">
    <property type="term" value="P:proteolysis involved in protein catabolic process"/>
    <property type="evidence" value="ECO:0007669"/>
    <property type="project" value="InterPro"/>
</dbReference>
<dbReference type="CDD" id="cd01913">
    <property type="entry name" value="protease_HslV"/>
    <property type="match status" value="1"/>
</dbReference>
<dbReference type="Gene3D" id="3.60.20.10">
    <property type="entry name" value="Glutamine Phosphoribosylpyrophosphate, subunit 1, domain 1"/>
    <property type="match status" value="1"/>
</dbReference>
<dbReference type="HAMAP" id="MF_00248">
    <property type="entry name" value="HslV"/>
    <property type="match status" value="1"/>
</dbReference>
<dbReference type="InterPro" id="IPR022281">
    <property type="entry name" value="ATP-dep_Prtase_HsIV_su"/>
</dbReference>
<dbReference type="InterPro" id="IPR029055">
    <property type="entry name" value="Ntn_hydrolases_N"/>
</dbReference>
<dbReference type="InterPro" id="IPR001353">
    <property type="entry name" value="Proteasome_sua/b"/>
</dbReference>
<dbReference type="InterPro" id="IPR023333">
    <property type="entry name" value="Proteasome_suB-type"/>
</dbReference>
<dbReference type="NCBIfam" id="TIGR03692">
    <property type="entry name" value="ATP_dep_HslV"/>
    <property type="match status" value="1"/>
</dbReference>
<dbReference type="NCBIfam" id="NF003964">
    <property type="entry name" value="PRK05456.1"/>
    <property type="match status" value="1"/>
</dbReference>
<dbReference type="PANTHER" id="PTHR32194:SF0">
    <property type="entry name" value="ATP-DEPENDENT PROTEASE SUBUNIT HSLV"/>
    <property type="match status" value="1"/>
</dbReference>
<dbReference type="PANTHER" id="PTHR32194">
    <property type="entry name" value="METALLOPROTEASE TLDD"/>
    <property type="match status" value="1"/>
</dbReference>
<dbReference type="Pfam" id="PF00227">
    <property type="entry name" value="Proteasome"/>
    <property type="match status" value="1"/>
</dbReference>
<dbReference type="PIRSF" id="PIRSF039093">
    <property type="entry name" value="HslV"/>
    <property type="match status" value="1"/>
</dbReference>
<dbReference type="SUPFAM" id="SSF56235">
    <property type="entry name" value="N-terminal nucleophile aminohydrolases (Ntn hydrolases)"/>
    <property type="match status" value="1"/>
</dbReference>
<dbReference type="PROSITE" id="PS51476">
    <property type="entry name" value="PROTEASOME_BETA_2"/>
    <property type="match status" value="1"/>
</dbReference>
<gene>
    <name evidence="1" type="primary">hslV</name>
    <name type="ordered locus">RP319</name>
</gene>
<name>HSLV_RICPR</name>
<feature type="chain" id="PRO_0000148140" description="ATP-dependent protease subunit HslV">
    <location>
        <begin position="1"/>
        <end position="182"/>
    </location>
</feature>
<feature type="active site" evidence="1">
    <location>
        <position position="10"/>
    </location>
</feature>
<feature type="binding site" evidence="1">
    <location>
        <position position="166"/>
    </location>
    <ligand>
        <name>Na(+)</name>
        <dbReference type="ChEBI" id="CHEBI:29101"/>
    </ligand>
</feature>
<feature type="binding site" evidence="1">
    <location>
        <position position="169"/>
    </location>
    <ligand>
        <name>Na(+)</name>
        <dbReference type="ChEBI" id="CHEBI:29101"/>
    </ligand>
</feature>
<feature type="binding site" evidence="1">
    <location>
        <position position="172"/>
    </location>
    <ligand>
        <name>Na(+)</name>
        <dbReference type="ChEBI" id="CHEBI:29101"/>
    </ligand>
</feature>
<reference key="1">
    <citation type="journal article" date="1998" name="Nature">
        <title>The genome sequence of Rickettsia prowazekii and the origin of mitochondria.</title>
        <authorList>
            <person name="Andersson S.G.E."/>
            <person name="Zomorodipour A."/>
            <person name="Andersson J.O."/>
            <person name="Sicheritz-Ponten T."/>
            <person name="Alsmark U.C.M."/>
            <person name="Podowski R.M."/>
            <person name="Naeslund A.K."/>
            <person name="Eriksson A.-S."/>
            <person name="Winkler H.H."/>
            <person name="Kurland C.G."/>
        </authorList>
    </citation>
    <scope>NUCLEOTIDE SEQUENCE [LARGE SCALE GENOMIC DNA]</scope>
    <source>
        <strain>Madrid E</strain>
    </source>
</reference>
<protein>
    <recommendedName>
        <fullName evidence="1">ATP-dependent protease subunit HslV</fullName>
        <ecNumber evidence="1">3.4.25.2</ecNumber>
    </recommendedName>
</protein>
<sequence length="182" mass="19873">MSDNFALHGTTILCLKKKEEIIIAADGQVSHGNTVLKSTARKLRTIANNKIIVGFAGSTADGLALFEKLEIKIEQYNSNLLRSAVELAKDWRNDKYLRRLEAMMIVADRSHILILTGNGDVIEPENNVAAIGSGGLFALSAARALMSYENNLTAEEIALKSMNIAADLCVFSNHNIIMEKVV</sequence>